<reference key="1">
    <citation type="journal article" date="2007" name="J. Bacteriol.">
        <title>The genome sequence of avian pathogenic Escherichia coli strain O1:K1:H7 shares strong similarities with human extraintestinal pathogenic E. coli genomes.</title>
        <authorList>
            <person name="Johnson T.J."/>
            <person name="Kariyawasam S."/>
            <person name="Wannemuehler Y."/>
            <person name="Mangiamele P."/>
            <person name="Johnson S.J."/>
            <person name="Doetkott C."/>
            <person name="Skyberg J.A."/>
            <person name="Lynne A.M."/>
            <person name="Johnson J.R."/>
            <person name="Nolan L.K."/>
        </authorList>
    </citation>
    <scope>NUCLEOTIDE SEQUENCE [LARGE SCALE GENOMIC DNA]</scope>
</reference>
<sequence>MSITAQSVYRDTGNFFRNQFMTILLVSLLCAFITVVLGHVFSPSDAQLAQLNDGVPVSGSSGLFDLVQNMSPEQQQILLQASAASTFSGLIGNAILAGGVILIIQLVSAGQRVSALRAIGASAPILPKLFILIFLTTLLVQIGIMLVVVPGIIMAILLALAPVMLVQDKMGVFASMRSSMRLTWANMRLVAPAVLSWLLAKTLLLLFASSFAALTPEIGAVLANTLSNLISAVLLIYLFRLYMLIRQ</sequence>
<dbReference type="EMBL" id="CP000468">
    <property type="protein sequence ID" value="ABJ00670.1"/>
    <property type="molecule type" value="Genomic_DNA"/>
</dbReference>
<dbReference type="RefSeq" id="WP_000028546.1">
    <property type="nucleotide sequence ID" value="NZ_CADILS010000001.1"/>
</dbReference>
<dbReference type="KEGG" id="ecv:APECO1_371"/>
<dbReference type="HOGENOM" id="CLU_073287_0_0_6"/>
<dbReference type="Proteomes" id="UP000008216">
    <property type="component" value="Chromosome"/>
</dbReference>
<dbReference type="GO" id="GO:0005886">
    <property type="term" value="C:plasma membrane"/>
    <property type="evidence" value="ECO:0007669"/>
    <property type="project" value="UniProtKB-SubCell"/>
</dbReference>
<dbReference type="HAMAP" id="MF_01067">
    <property type="entry name" value="UPF0259"/>
    <property type="match status" value="1"/>
</dbReference>
<dbReference type="InterPro" id="IPR009627">
    <property type="entry name" value="UPF0259"/>
</dbReference>
<dbReference type="NCBIfam" id="NF002774">
    <property type="entry name" value="PRK02868.1"/>
    <property type="match status" value="1"/>
</dbReference>
<dbReference type="Pfam" id="PF06790">
    <property type="entry name" value="UPF0259"/>
    <property type="match status" value="1"/>
</dbReference>
<keyword id="KW-0997">Cell inner membrane</keyword>
<keyword id="KW-1003">Cell membrane</keyword>
<keyword id="KW-0472">Membrane</keyword>
<keyword id="KW-1185">Reference proteome</keyword>
<keyword id="KW-0812">Transmembrane</keyword>
<keyword id="KW-1133">Transmembrane helix</keyword>
<evidence type="ECO:0000255" key="1">
    <source>
        <dbReference type="HAMAP-Rule" id="MF_01067"/>
    </source>
</evidence>
<name>YCIC_ECOK1</name>
<comment type="subcellular location">
    <subcellularLocation>
        <location evidence="1">Cell inner membrane</location>
        <topology evidence="1">Multi-pass membrane protein</topology>
    </subcellularLocation>
</comment>
<comment type="similarity">
    <text evidence="1">Belongs to the UPF0259 family.</text>
</comment>
<protein>
    <recommendedName>
        <fullName evidence="1">UPF0259 membrane protein YciC</fullName>
    </recommendedName>
</protein>
<organism>
    <name type="scientific">Escherichia coli O1:K1 / APEC</name>
    <dbReference type="NCBI Taxonomy" id="405955"/>
    <lineage>
        <taxon>Bacteria</taxon>
        <taxon>Pseudomonadati</taxon>
        <taxon>Pseudomonadota</taxon>
        <taxon>Gammaproteobacteria</taxon>
        <taxon>Enterobacterales</taxon>
        <taxon>Enterobacteriaceae</taxon>
        <taxon>Escherichia</taxon>
    </lineage>
</organism>
<gene>
    <name evidence="1" type="primary">yciC</name>
    <name type="ordered locus">Ecok1_11760</name>
    <name type="ORF">APECO1_371</name>
</gene>
<proteinExistence type="inferred from homology"/>
<accession>A1AAI0</accession>
<feature type="chain" id="PRO_1000064522" description="UPF0259 membrane protein YciC">
    <location>
        <begin position="1"/>
        <end position="247"/>
    </location>
</feature>
<feature type="transmembrane region" description="Helical" evidence="1">
    <location>
        <begin position="20"/>
        <end position="40"/>
    </location>
</feature>
<feature type="transmembrane region" description="Helical" evidence="1">
    <location>
        <begin position="87"/>
        <end position="107"/>
    </location>
</feature>
<feature type="transmembrane region" description="Helical" evidence="1">
    <location>
        <begin position="118"/>
        <end position="140"/>
    </location>
</feature>
<feature type="transmembrane region" description="Helical" evidence="1">
    <location>
        <begin position="152"/>
        <end position="172"/>
    </location>
</feature>
<feature type="transmembrane region" description="Helical" evidence="1">
    <location>
        <begin position="187"/>
        <end position="209"/>
    </location>
</feature>
<feature type="transmembrane region" description="Helical" evidence="1">
    <location>
        <begin position="225"/>
        <end position="245"/>
    </location>
</feature>